<sequence length="96" mass="10783">MKPIFIVALLFSTCLVNAKPSIDDAEMKREPKPNIINPPCIGCYYQVGNECVYDKFKCGAVRKREPKPNIINPPCIGCYYQVGNECVYDKFKCGAV</sequence>
<keyword id="KW-0165">Cleavage on pair of basic residues</keyword>
<keyword id="KW-0903">Direct protein sequencing</keyword>
<keyword id="KW-1015">Disulfide bond</keyword>
<keyword id="KW-0379">Hydroxylation</keyword>
<keyword id="KW-0166">Nematocyst</keyword>
<keyword id="KW-0528">Neurotoxin</keyword>
<keyword id="KW-0677">Repeat</keyword>
<keyword id="KW-0964">Secreted</keyword>
<keyword id="KW-0732">Signal</keyword>
<keyword id="KW-0800">Toxin</keyword>
<dbReference type="EMBL" id="LC054039">
    <property type="protein sequence ID" value="BAS68534.1"/>
    <property type="molecule type" value="mRNA"/>
</dbReference>
<dbReference type="GO" id="GO:0005576">
    <property type="term" value="C:extracellular region"/>
    <property type="evidence" value="ECO:0007669"/>
    <property type="project" value="UniProtKB-SubCell"/>
</dbReference>
<dbReference type="GO" id="GO:0042151">
    <property type="term" value="C:nematocyst"/>
    <property type="evidence" value="ECO:0007669"/>
    <property type="project" value="UniProtKB-SubCell"/>
</dbReference>
<dbReference type="CDD" id="cd21873">
    <property type="entry name" value="Ugr_9a-1-like"/>
    <property type="match status" value="2"/>
</dbReference>
<name>BBH2B_HETAU</name>
<proteinExistence type="evidence at protein level"/>
<reference evidence="8" key="1">
    <citation type="journal article" date="2024" name="J. Venom. Anim. Toxins Incl. Trop. Dis.">
        <title>Isolation and cDNA cloning of four peptide toxins from the sea anemone Heteractis aurora.</title>
        <authorList>
            <person name="Homma T."/>
            <person name="Ishida M."/>
            <person name="Nagashima Y."/>
            <person name="Shiomi K."/>
        </authorList>
    </citation>
    <scope>NUCLEOTIDE SEQUENCE [MRNA]</scope>
    <scope>PROTEIN SEQUENCE OF 34-58 AND 69-93</scope>
    <scope>MASS SPECTROMETRY</scope>
    <scope>TOXIC DOSE</scope>
</reference>
<evidence type="ECO:0000250" key="1">
    <source>
        <dbReference type="UniProtKB" id="P69929"/>
    </source>
</evidence>
<evidence type="ECO:0000250" key="2">
    <source>
        <dbReference type="UniProtKB" id="R4ZCU1"/>
    </source>
</evidence>
<evidence type="ECO:0000255" key="3"/>
<evidence type="ECO:0000269" key="4">
    <source>
    </source>
</evidence>
<evidence type="ECO:0000303" key="5">
    <source>
    </source>
</evidence>
<evidence type="ECO:0000305" key="6"/>
<evidence type="ECO:0000305" key="7">
    <source>
    </source>
</evidence>
<evidence type="ECO:0000312" key="8">
    <source>
        <dbReference type="EMBL" id="BAS68534.1"/>
    </source>
</evidence>
<protein>
    <recommendedName>
        <fullName evidence="5">U-stichotoxin-Hau2b</fullName>
        <shortName evidence="5">U-SHTX-Hau2b</shortName>
    </recommendedName>
    <alternativeName>
        <fullName evidence="5">Hau III</fullName>
    </alternativeName>
</protein>
<gene>
    <name evidence="8" type="primary">HAUTX3</name>
</gene>
<organism>
    <name type="scientific">Heteractis aurora</name>
    <name type="common">Banded sea anemone</name>
    <name type="synonym">Actinia aurora</name>
    <dbReference type="NCBI Taxonomy" id="478399"/>
    <lineage>
        <taxon>Eukaryota</taxon>
        <taxon>Metazoa</taxon>
        <taxon>Cnidaria</taxon>
        <taxon>Anthozoa</taxon>
        <taxon>Hexacorallia</taxon>
        <taxon>Actiniaria</taxon>
        <taxon>Stichodactylidae</taxon>
        <taxon>Heteractis</taxon>
    </lineage>
</organism>
<feature type="signal peptide" evidence="3">
    <location>
        <begin position="1"/>
        <end position="18"/>
    </location>
</feature>
<feature type="propeptide" id="PRO_0000462077" evidence="1">
    <location>
        <begin position="19"/>
        <end position="29"/>
    </location>
</feature>
<feature type="propeptide" id="PRO_0000462078" evidence="1">
    <location>
        <begin position="30"/>
        <end position="33"/>
    </location>
</feature>
<feature type="peptide" id="PRO_5006056080" description="U-stichotoxin-Hau2b" evidence="4">
    <location>
        <begin position="34"/>
        <end position="61"/>
    </location>
</feature>
<feature type="propeptide" id="PRO_0000462079" evidence="1">
    <location>
        <begin position="62"/>
        <end position="64"/>
    </location>
</feature>
<feature type="propeptide" id="PRO_0000462080" evidence="1">
    <location>
        <begin position="65"/>
        <end position="68"/>
    </location>
</feature>
<feature type="peptide" id="PRO_0000462081" description="U-stichotoxin-Hau2b" evidence="4">
    <location>
        <begin position="69"/>
        <end position="96"/>
    </location>
</feature>
<feature type="site" description="Cleavage" evidence="1">
    <location>
        <begin position="29"/>
        <end position="30"/>
    </location>
</feature>
<feature type="site" description="Cleavage" evidence="1">
    <location>
        <begin position="64"/>
        <end position="65"/>
    </location>
</feature>
<feature type="disulfide bond" evidence="2">
    <location>
        <begin position="40"/>
        <end position="51"/>
    </location>
</feature>
<feature type="disulfide bond" evidence="2">
    <location>
        <begin position="43"/>
        <end position="58"/>
    </location>
</feature>
<feature type="disulfide bond" evidence="2">
    <location>
        <begin position="75"/>
        <end position="86"/>
    </location>
</feature>
<feature type="disulfide bond" evidence="2">
    <location>
        <begin position="78"/>
        <end position="93"/>
    </location>
</feature>
<comment type="function">
    <text evidence="4">Neurotoxin that paralyzes freshwater crabs at high concentration.</text>
</comment>
<comment type="subcellular location">
    <subcellularLocation>
        <location evidence="6">Secreted</location>
    </subcellularLocation>
    <subcellularLocation>
        <location evidence="6">Nematocyst</location>
    </subcellularLocation>
</comment>
<comment type="mass spectrometry" mass="3106.9" method="MALDI" evidence="4"/>
<comment type="toxic dose">
    <text evidence="4">PD(50) is 1400 ug/kg when injected into the body cavity of freshwater crabs (G.dehaani).</text>
</comment>
<comment type="similarity">
    <text evidence="7">Belongs to the sea anemone BBH family.</text>
</comment>
<accession>A0A0P0UTQ7</accession>